<keyword id="KW-0002">3D-structure</keyword>
<keyword id="KW-0150">Chloroplast</keyword>
<keyword id="KW-0903">Direct protein sequencing</keyword>
<keyword id="KW-0934">Plastid</keyword>
<keyword id="KW-1185">Reference proteome</keyword>
<keyword id="KW-0687">Ribonucleoprotein</keyword>
<keyword id="KW-0689">Ribosomal protein</keyword>
<gene>
    <name type="primary">rps15</name>
</gene>
<name>RR15_SPIOL</name>
<geneLocation type="chloroplast"/>
<protein>
    <recommendedName>
        <fullName evidence="4">Small ribosomal subunit protein uS15c</fullName>
    </recommendedName>
    <alternativeName>
        <fullName evidence="3">30S ribosomal protein S15, chloroplastic</fullName>
    </alternativeName>
</protein>
<proteinExistence type="evidence at protein level"/>
<sequence>MKKNSFISVISDEKKEENKGSVEFQVFCFTNKIRRLTLHLELHKKDYSSQRGLRKTLGKRQRLLAYLLKINGVRYKELISKLNIRELKTR</sequence>
<evidence type="ECO:0000269" key="1">
    <source>
    </source>
</evidence>
<evidence type="ECO:0000269" key="2">
    <source>
    </source>
</evidence>
<evidence type="ECO:0000303" key="3">
    <source>
    </source>
</evidence>
<evidence type="ECO:0000303" key="4">
    <source>
    </source>
</evidence>
<evidence type="ECO:0000305" key="5"/>
<evidence type="ECO:0000305" key="6">
    <source>
    </source>
</evidence>
<evidence type="ECO:0000305" key="7">
    <source>
    </source>
</evidence>
<comment type="function">
    <text evidence="6 7">Component of the chloroplast ribosome (chloro-ribosome), a dedicated translation machinery responsible for the synthesis of chloroplast genome-encoded proteins, including proteins of the transcription and translation machinery and components of the photosynthetic apparatus.</text>
</comment>
<comment type="subunit">
    <text evidence="1 2">Component of the chloroplast small ribosomal subunit (SSU). Mature 70S chloroplast ribosomes of higher plants consist of a small (30S) and a large (50S) subunit. The 30S small subunit contains 1 molecule of ribosomal RNA (16S rRNA) and 24 different proteins. The 50S large subunit contains 3 rRNA molecules (23S, 5S and 4.5S rRNA) and 33 different proteins.</text>
</comment>
<comment type="subcellular location">
    <subcellularLocation>
        <location evidence="1 2">Plastid</location>
        <location evidence="1 2">Chloroplast</location>
    </subcellularLocation>
</comment>
<comment type="mass spectrometry"/>
<comment type="mass spectrometry"/>
<comment type="similarity">
    <text evidence="5">Belongs to the universal ribosomal protein uS15 family.</text>
</comment>
<organism>
    <name type="scientific">Spinacia oleracea</name>
    <name type="common">Spinach</name>
    <dbReference type="NCBI Taxonomy" id="3562"/>
    <lineage>
        <taxon>Eukaryota</taxon>
        <taxon>Viridiplantae</taxon>
        <taxon>Streptophyta</taxon>
        <taxon>Embryophyta</taxon>
        <taxon>Tracheophyta</taxon>
        <taxon>Spermatophyta</taxon>
        <taxon>Magnoliopsida</taxon>
        <taxon>eudicotyledons</taxon>
        <taxon>Gunneridae</taxon>
        <taxon>Pentapetalae</taxon>
        <taxon>Caryophyllales</taxon>
        <taxon>Chenopodiaceae</taxon>
        <taxon>Chenopodioideae</taxon>
        <taxon>Anserineae</taxon>
        <taxon>Spinacia</taxon>
    </lineage>
</organism>
<reference key="1">
    <citation type="journal article" date="2001" name="Plant Mol. Biol.">
        <title>The plastid chromosome of spinach (Spinacia oleracea): complete nucleotide sequence and gene organization.</title>
        <authorList>
            <person name="Schmitz-Linneweber C."/>
            <person name="Maier R.M."/>
            <person name="Alcaraz J.-P."/>
            <person name="Cottet A."/>
            <person name="Herrmann R.G."/>
            <person name="Mache R."/>
        </authorList>
    </citation>
    <scope>NUCLEOTIDE SEQUENCE [LARGE SCALE GENOMIC DNA]</scope>
    <source>
        <strain>cv. Geant d'hiver</strain>
        <strain>cv. Monatol</strain>
    </source>
</reference>
<reference key="2">
    <citation type="journal article" date="2000" name="J. Biol. Chem.">
        <title>The plastid ribosomal proteins. Identification of all the proteins in the 30S subunit of an organelle ribosome (chloroplast).</title>
        <authorList>
            <person name="Yamaguchi K."/>
            <person name="von Knoblauch K."/>
            <person name="Subramanian A.R."/>
        </authorList>
    </citation>
    <scope>PROTEIN SEQUENCE OF 1-20</scope>
    <scope>FUNCTION</scope>
    <scope>SUBUNIT</scope>
    <scope>SUBCELLULAR LOCATION</scope>
    <scope>MASS SPECTROMETRY</scope>
    <source>
        <strain>cv. Alwaro</strain>
        <tissue>Leaf</tissue>
    </source>
</reference>
<reference key="3">
    <citation type="journal article" date="2007" name="Proc. Natl. Acad. Sci. U.S.A.">
        <title>Cryo-EM study of the spinach chloroplast ribosome reveals the structural and functional roles of plastid-specific ribosomal proteins.</title>
        <authorList>
            <person name="Sharma M.R."/>
            <person name="Wilson D.N."/>
            <person name="Datta P.P."/>
            <person name="Barat C."/>
            <person name="Schluenzen F."/>
            <person name="Fucini P."/>
            <person name="Agrawal R.K."/>
        </authorList>
    </citation>
    <scope>STRUCTURE BY ELECTRON MICROSCOPY (9.4 ANGSTROMS)</scope>
</reference>
<reference key="4">
    <citation type="journal article" date="2017" name="EMBO J.">
        <title>The complete structure of the chloroplast 70S ribosome in complex with translation factor pY.</title>
        <authorList>
            <person name="Bieri P."/>
            <person name="Leibundgut M."/>
            <person name="Saurer M."/>
            <person name="Boehringer D."/>
            <person name="Ban N."/>
        </authorList>
    </citation>
    <scope>STRUCTURE BY ELECTRON MICROSCOPY (3.40 ANGSTROMS)</scope>
    <scope>SUBUNIT</scope>
    <scope>SUBCELLULAR LOCATION</scope>
</reference>
<accession>Q9M3I4</accession>
<accession>P82138</accession>
<feature type="chain" id="PRO_0000115654" description="Small ribosomal subunit protein uS15c">
    <location>
        <begin position="1"/>
        <end position="90"/>
    </location>
</feature>
<feature type="sequence conflict" description="In Ref. 2; AA sequence." evidence="5" ref="2">
    <original>D</original>
    <variation>P</variation>
    <location>
        <position position="12"/>
    </location>
</feature>
<dbReference type="EMBL" id="AJ400848">
    <property type="protein sequence ID" value="CAB88791.1"/>
    <property type="molecule type" value="Genomic_DNA"/>
</dbReference>
<dbReference type="RefSeq" id="NP_054995.1">
    <property type="nucleotide sequence ID" value="NC_002202.1"/>
</dbReference>
<dbReference type="PDB" id="4V61">
    <property type="method" value="EM"/>
    <property type="resolution" value="9.40 A"/>
    <property type="chains" value="AO=1-90"/>
</dbReference>
<dbReference type="PDB" id="5MMJ">
    <property type="method" value="EM"/>
    <property type="resolution" value="3.65 A"/>
    <property type="chains" value="o=1-90"/>
</dbReference>
<dbReference type="PDB" id="5MMM">
    <property type="method" value="EM"/>
    <property type="resolution" value="3.40 A"/>
    <property type="chains" value="o=1-90"/>
</dbReference>
<dbReference type="PDB" id="5X8P">
    <property type="method" value="EM"/>
    <property type="resolution" value="3.40 A"/>
    <property type="chains" value="o=1-90"/>
</dbReference>
<dbReference type="PDB" id="5X8R">
    <property type="method" value="EM"/>
    <property type="resolution" value="3.70 A"/>
    <property type="chains" value="o=1-90"/>
</dbReference>
<dbReference type="PDB" id="6ERI">
    <property type="method" value="EM"/>
    <property type="resolution" value="3.00 A"/>
    <property type="chains" value="BO=18-89"/>
</dbReference>
<dbReference type="PDBsum" id="4V61"/>
<dbReference type="PDBsum" id="5MMJ"/>
<dbReference type="PDBsum" id="5MMM"/>
<dbReference type="PDBsum" id="5X8P"/>
<dbReference type="PDBsum" id="5X8R"/>
<dbReference type="PDBsum" id="6ERI"/>
<dbReference type="EMDB" id="EMD-3532"/>
<dbReference type="EMDB" id="EMD-3533"/>
<dbReference type="EMDB" id="EMD-3941"/>
<dbReference type="EMDB" id="EMD-6709"/>
<dbReference type="EMDB" id="EMD-6710"/>
<dbReference type="SMR" id="Q9M3I4"/>
<dbReference type="FunCoup" id="Q9M3I4">
    <property type="interactions" value="141"/>
</dbReference>
<dbReference type="STRING" id="3562.Q9M3I4"/>
<dbReference type="GeneID" id="2715638"/>
<dbReference type="KEGG" id="soe:2715638"/>
<dbReference type="InParanoid" id="Q9M3I4"/>
<dbReference type="OrthoDB" id="441444at2759"/>
<dbReference type="Proteomes" id="UP001155700">
    <property type="component" value="Chloroplast Pltd"/>
</dbReference>
<dbReference type="GO" id="GO:0009507">
    <property type="term" value="C:chloroplast"/>
    <property type="evidence" value="ECO:0007669"/>
    <property type="project" value="UniProtKB-SubCell"/>
</dbReference>
<dbReference type="GO" id="GO:1990904">
    <property type="term" value="C:ribonucleoprotein complex"/>
    <property type="evidence" value="ECO:0007669"/>
    <property type="project" value="UniProtKB-KW"/>
</dbReference>
<dbReference type="GO" id="GO:0005840">
    <property type="term" value="C:ribosome"/>
    <property type="evidence" value="ECO:0007669"/>
    <property type="project" value="UniProtKB-KW"/>
</dbReference>
<dbReference type="GO" id="GO:0003735">
    <property type="term" value="F:structural constituent of ribosome"/>
    <property type="evidence" value="ECO:0007669"/>
    <property type="project" value="InterPro"/>
</dbReference>
<dbReference type="GO" id="GO:0006412">
    <property type="term" value="P:translation"/>
    <property type="evidence" value="ECO:0007669"/>
    <property type="project" value="UniProtKB-UniRule"/>
</dbReference>
<dbReference type="CDD" id="cd00353">
    <property type="entry name" value="Ribosomal_S15p_S13e"/>
    <property type="match status" value="1"/>
</dbReference>
<dbReference type="Gene3D" id="1.10.287.10">
    <property type="entry name" value="S15/NS1, RNA-binding"/>
    <property type="match status" value="1"/>
</dbReference>
<dbReference type="HAMAP" id="MF_01343_B">
    <property type="entry name" value="Ribosomal_uS15_B"/>
    <property type="match status" value="1"/>
</dbReference>
<dbReference type="InterPro" id="IPR000589">
    <property type="entry name" value="Ribosomal_uS15"/>
</dbReference>
<dbReference type="InterPro" id="IPR005290">
    <property type="entry name" value="Ribosomal_uS15_bac-type"/>
</dbReference>
<dbReference type="InterPro" id="IPR009068">
    <property type="entry name" value="uS15_NS1_RNA-bd_sf"/>
</dbReference>
<dbReference type="NCBIfam" id="TIGR00952">
    <property type="entry name" value="S15_bact"/>
    <property type="match status" value="1"/>
</dbReference>
<dbReference type="PANTHER" id="PTHR23321">
    <property type="entry name" value="RIBOSOMAL PROTEIN S15, BACTERIAL AND ORGANELLAR"/>
    <property type="match status" value="1"/>
</dbReference>
<dbReference type="PANTHER" id="PTHR23321:SF26">
    <property type="entry name" value="SMALL RIBOSOMAL SUBUNIT PROTEIN US15M"/>
    <property type="match status" value="1"/>
</dbReference>
<dbReference type="Pfam" id="PF00312">
    <property type="entry name" value="Ribosomal_S15"/>
    <property type="match status" value="1"/>
</dbReference>
<dbReference type="SMART" id="SM01387">
    <property type="entry name" value="Ribosomal_S15"/>
    <property type="match status" value="1"/>
</dbReference>
<dbReference type="SUPFAM" id="SSF47060">
    <property type="entry name" value="S15/NS1 RNA-binding domain"/>
    <property type="match status" value="1"/>
</dbReference>
<dbReference type="PROSITE" id="PS00362">
    <property type="entry name" value="RIBOSOMAL_S15"/>
    <property type="match status" value="1"/>
</dbReference>